<gene>
    <name evidence="1" type="primary">rpmJ</name>
    <name type="ordered locus">SAHV_2211</name>
</gene>
<feature type="chain" id="PRO_1000003419" description="Large ribosomal subunit protein bL36">
    <location>
        <begin position="1"/>
        <end position="37"/>
    </location>
</feature>
<organism>
    <name type="scientific">Staphylococcus aureus (strain Mu3 / ATCC 700698)</name>
    <dbReference type="NCBI Taxonomy" id="418127"/>
    <lineage>
        <taxon>Bacteria</taxon>
        <taxon>Bacillati</taxon>
        <taxon>Bacillota</taxon>
        <taxon>Bacilli</taxon>
        <taxon>Bacillales</taxon>
        <taxon>Staphylococcaceae</taxon>
        <taxon>Staphylococcus</taxon>
    </lineage>
</organism>
<sequence length="37" mass="4305">MKVRPSVKPICEKCKVIKRKGKVMVICENPKHKQRQG</sequence>
<keyword id="KW-0687">Ribonucleoprotein</keyword>
<keyword id="KW-0689">Ribosomal protein</keyword>
<proteinExistence type="inferred from homology"/>
<comment type="similarity">
    <text evidence="1">Belongs to the bacterial ribosomal protein bL36 family.</text>
</comment>
<reference key="1">
    <citation type="journal article" date="2008" name="Antimicrob. Agents Chemother.">
        <title>Mutated response regulator graR is responsible for phenotypic conversion of Staphylococcus aureus from heterogeneous vancomycin-intermediate resistance to vancomycin-intermediate resistance.</title>
        <authorList>
            <person name="Neoh H.-M."/>
            <person name="Cui L."/>
            <person name="Yuzawa H."/>
            <person name="Takeuchi F."/>
            <person name="Matsuo M."/>
            <person name="Hiramatsu K."/>
        </authorList>
    </citation>
    <scope>NUCLEOTIDE SEQUENCE [LARGE SCALE GENOMIC DNA]</scope>
    <source>
        <strain>Mu3 / ATCC 700698</strain>
    </source>
</reference>
<dbReference type="EMBL" id="AP009324">
    <property type="protein sequence ID" value="BAF79094.1"/>
    <property type="molecule type" value="Genomic_DNA"/>
</dbReference>
<dbReference type="RefSeq" id="WP_000868342.1">
    <property type="nucleotide sequence ID" value="NZ_CTYB01000025.1"/>
</dbReference>
<dbReference type="SMR" id="A7X5C8"/>
<dbReference type="GeneID" id="98346539"/>
<dbReference type="KEGG" id="saw:SAHV_2211"/>
<dbReference type="HOGENOM" id="CLU_135723_6_2_9"/>
<dbReference type="GO" id="GO:0005737">
    <property type="term" value="C:cytoplasm"/>
    <property type="evidence" value="ECO:0007669"/>
    <property type="project" value="UniProtKB-ARBA"/>
</dbReference>
<dbReference type="GO" id="GO:1990904">
    <property type="term" value="C:ribonucleoprotein complex"/>
    <property type="evidence" value="ECO:0007669"/>
    <property type="project" value="UniProtKB-KW"/>
</dbReference>
<dbReference type="GO" id="GO:0005840">
    <property type="term" value="C:ribosome"/>
    <property type="evidence" value="ECO:0007669"/>
    <property type="project" value="UniProtKB-KW"/>
</dbReference>
<dbReference type="GO" id="GO:0003735">
    <property type="term" value="F:structural constituent of ribosome"/>
    <property type="evidence" value="ECO:0007669"/>
    <property type="project" value="InterPro"/>
</dbReference>
<dbReference type="GO" id="GO:0006412">
    <property type="term" value="P:translation"/>
    <property type="evidence" value="ECO:0007669"/>
    <property type="project" value="UniProtKB-UniRule"/>
</dbReference>
<dbReference type="HAMAP" id="MF_00251">
    <property type="entry name" value="Ribosomal_bL36"/>
    <property type="match status" value="1"/>
</dbReference>
<dbReference type="InterPro" id="IPR000473">
    <property type="entry name" value="Ribosomal_bL36"/>
</dbReference>
<dbReference type="InterPro" id="IPR035977">
    <property type="entry name" value="Ribosomal_bL36_sp"/>
</dbReference>
<dbReference type="NCBIfam" id="TIGR01022">
    <property type="entry name" value="rpmJ_bact"/>
    <property type="match status" value="1"/>
</dbReference>
<dbReference type="PANTHER" id="PTHR42888">
    <property type="entry name" value="50S RIBOSOMAL PROTEIN L36, CHLOROPLASTIC"/>
    <property type="match status" value="1"/>
</dbReference>
<dbReference type="PANTHER" id="PTHR42888:SF1">
    <property type="entry name" value="LARGE RIBOSOMAL SUBUNIT PROTEIN BL36C"/>
    <property type="match status" value="1"/>
</dbReference>
<dbReference type="Pfam" id="PF00444">
    <property type="entry name" value="Ribosomal_L36"/>
    <property type="match status" value="1"/>
</dbReference>
<dbReference type="SUPFAM" id="SSF57840">
    <property type="entry name" value="Ribosomal protein L36"/>
    <property type="match status" value="1"/>
</dbReference>
<dbReference type="PROSITE" id="PS00828">
    <property type="entry name" value="RIBOSOMAL_L36"/>
    <property type="match status" value="1"/>
</dbReference>
<accession>A7X5C8</accession>
<evidence type="ECO:0000255" key="1">
    <source>
        <dbReference type="HAMAP-Rule" id="MF_00251"/>
    </source>
</evidence>
<evidence type="ECO:0000305" key="2"/>
<name>RL36_STAA1</name>
<protein>
    <recommendedName>
        <fullName evidence="1">Large ribosomal subunit protein bL36</fullName>
    </recommendedName>
    <alternativeName>
        <fullName evidence="2">50S ribosomal protein L36</fullName>
    </alternativeName>
</protein>